<proteinExistence type="inferred from homology"/>
<reference key="1">
    <citation type="journal article" date="2004" name="Proc. Natl. Acad. Sci. U.S.A.">
        <title>Genomic analysis of Bacteroides fragilis reveals extensive DNA inversions regulating cell surface adaptation.</title>
        <authorList>
            <person name="Kuwahara T."/>
            <person name="Yamashita A."/>
            <person name="Hirakawa H."/>
            <person name="Nakayama H."/>
            <person name="Toh H."/>
            <person name="Okada N."/>
            <person name="Kuhara S."/>
            <person name="Hattori M."/>
            <person name="Hayashi T."/>
            <person name="Ohnishi Y."/>
        </authorList>
    </citation>
    <scope>NUCLEOTIDE SEQUENCE [LARGE SCALE GENOMIC DNA]</scope>
    <source>
        <strain>YCH46</strain>
    </source>
</reference>
<protein>
    <recommendedName>
        <fullName evidence="1">Ribonuclease Y</fullName>
        <shortName evidence="1">RNase Y</shortName>
        <ecNumber evidence="1">3.1.-.-</ecNumber>
    </recommendedName>
</protein>
<accession>Q64Q86</accession>
<gene>
    <name evidence="1" type="primary">rny</name>
    <name type="ordered locus">BF3602</name>
</gene>
<comment type="function">
    <text evidence="1">Endoribonuclease that initiates mRNA decay.</text>
</comment>
<comment type="subcellular location">
    <subcellularLocation>
        <location evidence="1">Cell membrane</location>
        <topology evidence="1">Single-pass membrane protein</topology>
    </subcellularLocation>
</comment>
<comment type="similarity">
    <text evidence="1">Belongs to the RNase Y family.</text>
</comment>
<name>RNY_BACFR</name>
<evidence type="ECO:0000255" key="1">
    <source>
        <dbReference type="HAMAP-Rule" id="MF_00335"/>
    </source>
</evidence>
<evidence type="ECO:0000255" key="2">
    <source>
        <dbReference type="PROSITE-ProRule" id="PRU01175"/>
    </source>
</evidence>
<organism>
    <name type="scientific">Bacteroides fragilis (strain YCH46)</name>
    <dbReference type="NCBI Taxonomy" id="295405"/>
    <lineage>
        <taxon>Bacteria</taxon>
        <taxon>Pseudomonadati</taxon>
        <taxon>Bacteroidota</taxon>
        <taxon>Bacteroidia</taxon>
        <taxon>Bacteroidales</taxon>
        <taxon>Bacteroidaceae</taxon>
        <taxon>Bacteroides</taxon>
    </lineage>
</organism>
<feature type="chain" id="PRO_0000344824" description="Ribonuclease Y">
    <location>
        <begin position="1"/>
        <end position="511"/>
    </location>
</feature>
<feature type="transmembrane region" description="Helical" evidence="1">
    <location>
        <begin position="3"/>
        <end position="23"/>
    </location>
</feature>
<feature type="domain" description="KH" evidence="1">
    <location>
        <begin position="201"/>
        <end position="261"/>
    </location>
</feature>
<feature type="domain" description="HD" evidence="2">
    <location>
        <begin position="327"/>
        <end position="420"/>
    </location>
</feature>
<sequence>MLVTIVASIACFIVGGILSYVLFKYGLKAKYDNVLKEAETEAEVIKKNKLLEVKEKFLNKKADLEKEVALRNQKIQQAENKLKQREMVLSQRQEEIQRKRAEADAVRENLEAQLGIVDKKKEELDKLQHQEIEKLEALSGLSADEAKERLVESLKEEAKTQAQSYINDIMDDAKLTASKEAKRIVIQSIQRVATETAIENSVTVFHIESDEIKGRIIGREGRNIRALEAATGVEIVVDDTPEAIVLSAFDPVRREIARLALHQLVTDGRIHPARIEEVVAKVRKQVEEEIIETGKRTTIDLGIHGLHPELIRIIGKMKYRSSYGQNLLQHARETANLCAVMASELGLNPKKAKRAGLLHDIGKVPDEEPELPHALLGMKLAEKFKEKPDICNAIGAHHDEIEMTSLLAPIVQVCDAISGARPGARREIVEAYIKRLNDLEQLAMSYPGVTKTYAIQAGRELRVIVGADKIDDKQTENLSGEIAKKIQDEMTYPGQVKITVIRETRAVSFAK</sequence>
<keyword id="KW-1003">Cell membrane</keyword>
<keyword id="KW-0255">Endonuclease</keyword>
<keyword id="KW-0378">Hydrolase</keyword>
<keyword id="KW-0472">Membrane</keyword>
<keyword id="KW-0540">Nuclease</keyword>
<keyword id="KW-0694">RNA-binding</keyword>
<keyword id="KW-0812">Transmembrane</keyword>
<keyword id="KW-1133">Transmembrane helix</keyword>
<dbReference type="EC" id="3.1.-.-" evidence="1"/>
<dbReference type="EMBL" id="AP006841">
    <property type="protein sequence ID" value="BAD50345.1"/>
    <property type="molecule type" value="Genomic_DNA"/>
</dbReference>
<dbReference type="RefSeq" id="WP_005790424.1">
    <property type="nucleotide sequence ID" value="NZ_UYXF01000009.1"/>
</dbReference>
<dbReference type="RefSeq" id="YP_100879.1">
    <property type="nucleotide sequence ID" value="NC_006347.1"/>
</dbReference>
<dbReference type="SMR" id="Q64Q86"/>
<dbReference type="STRING" id="295405.BF3602"/>
<dbReference type="GeneID" id="60367103"/>
<dbReference type="KEGG" id="bfr:BF3602"/>
<dbReference type="PATRIC" id="fig|295405.11.peg.3459"/>
<dbReference type="HOGENOM" id="CLU_028328_1_0_10"/>
<dbReference type="OrthoDB" id="9803205at2"/>
<dbReference type="Proteomes" id="UP000002197">
    <property type="component" value="Chromosome"/>
</dbReference>
<dbReference type="GO" id="GO:0005886">
    <property type="term" value="C:plasma membrane"/>
    <property type="evidence" value="ECO:0007669"/>
    <property type="project" value="UniProtKB-SubCell"/>
</dbReference>
<dbReference type="GO" id="GO:0003723">
    <property type="term" value="F:RNA binding"/>
    <property type="evidence" value="ECO:0007669"/>
    <property type="project" value="UniProtKB-UniRule"/>
</dbReference>
<dbReference type="GO" id="GO:0004521">
    <property type="term" value="F:RNA endonuclease activity"/>
    <property type="evidence" value="ECO:0007669"/>
    <property type="project" value="UniProtKB-UniRule"/>
</dbReference>
<dbReference type="GO" id="GO:0006402">
    <property type="term" value="P:mRNA catabolic process"/>
    <property type="evidence" value="ECO:0007669"/>
    <property type="project" value="UniProtKB-UniRule"/>
</dbReference>
<dbReference type="CDD" id="cd00077">
    <property type="entry name" value="HDc"/>
    <property type="match status" value="1"/>
</dbReference>
<dbReference type="CDD" id="cd22431">
    <property type="entry name" value="KH-I_RNaseY"/>
    <property type="match status" value="1"/>
</dbReference>
<dbReference type="FunFam" id="1.10.3210.10:FF:000013">
    <property type="entry name" value="Ribonuclease Y"/>
    <property type="match status" value="1"/>
</dbReference>
<dbReference type="Gene3D" id="1.10.3210.10">
    <property type="entry name" value="Hypothetical protein af1432"/>
    <property type="match status" value="1"/>
</dbReference>
<dbReference type="Gene3D" id="3.30.1370.10">
    <property type="entry name" value="K Homology domain, type 1"/>
    <property type="match status" value="1"/>
</dbReference>
<dbReference type="HAMAP" id="MF_00335">
    <property type="entry name" value="RNase_Y"/>
    <property type="match status" value="1"/>
</dbReference>
<dbReference type="InterPro" id="IPR003607">
    <property type="entry name" value="HD/PDEase_dom"/>
</dbReference>
<dbReference type="InterPro" id="IPR006674">
    <property type="entry name" value="HD_domain"/>
</dbReference>
<dbReference type="InterPro" id="IPR006675">
    <property type="entry name" value="HDIG_dom"/>
</dbReference>
<dbReference type="InterPro" id="IPR004087">
    <property type="entry name" value="KH_dom"/>
</dbReference>
<dbReference type="InterPro" id="IPR004088">
    <property type="entry name" value="KH_dom_type_1"/>
</dbReference>
<dbReference type="InterPro" id="IPR036612">
    <property type="entry name" value="KH_dom_type_1_sf"/>
</dbReference>
<dbReference type="InterPro" id="IPR017705">
    <property type="entry name" value="Ribonuclease_Y"/>
</dbReference>
<dbReference type="InterPro" id="IPR022711">
    <property type="entry name" value="RNase_Y_N"/>
</dbReference>
<dbReference type="NCBIfam" id="TIGR00277">
    <property type="entry name" value="HDIG"/>
    <property type="match status" value="1"/>
</dbReference>
<dbReference type="NCBIfam" id="TIGR03319">
    <property type="entry name" value="RNase_Y"/>
    <property type="match status" value="1"/>
</dbReference>
<dbReference type="PANTHER" id="PTHR12826">
    <property type="entry name" value="RIBONUCLEASE Y"/>
    <property type="match status" value="1"/>
</dbReference>
<dbReference type="PANTHER" id="PTHR12826:SF15">
    <property type="entry name" value="RIBONUCLEASE Y"/>
    <property type="match status" value="1"/>
</dbReference>
<dbReference type="Pfam" id="PF01966">
    <property type="entry name" value="HD"/>
    <property type="match status" value="1"/>
</dbReference>
<dbReference type="Pfam" id="PF00013">
    <property type="entry name" value="KH_1"/>
    <property type="match status" value="1"/>
</dbReference>
<dbReference type="Pfam" id="PF12072">
    <property type="entry name" value="RNase_Y_N"/>
    <property type="match status" value="1"/>
</dbReference>
<dbReference type="SMART" id="SM00471">
    <property type="entry name" value="HDc"/>
    <property type="match status" value="1"/>
</dbReference>
<dbReference type="SMART" id="SM00322">
    <property type="entry name" value="KH"/>
    <property type="match status" value="1"/>
</dbReference>
<dbReference type="SUPFAM" id="SSF54791">
    <property type="entry name" value="Eukaryotic type KH-domain (KH-domain type I)"/>
    <property type="match status" value="1"/>
</dbReference>
<dbReference type="SUPFAM" id="SSF109604">
    <property type="entry name" value="HD-domain/PDEase-like"/>
    <property type="match status" value="1"/>
</dbReference>
<dbReference type="PROSITE" id="PS51831">
    <property type="entry name" value="HD"/>
    <property type="match status" value="1"/>
</dbReference>
<dbReference type="PROSITE" id="PS50084">
    <property type="entry name" value="KH_TYPE_1"/>
    <property type="match status" value="1"/>
</dbReference>